<accession>Q61490</accession>
<accession>O70136</accession>
<accession>Q8CDA5</accession>
<accession>Q8R2T0</accession>
<dbReference type="EMBL" id="U95030">
    <property type="protein sequence ID" value="AAC06342.1"/>
    <property type="molecule type" value="mRNA"/>
</dbReference>
<dbReference type="EMBL" id="AK030851">
    <property type="protein sequence ID" value="BAC27159.1"/>
    <property type="molecule type" value="mRNA"/>
</dbReference>
<dbReference type="EMBL" id="AK031391">
    <property type="protein sequence ID" value="BAC27382.1"/>
    <property type="molecule type" value="mRNA"/>
</dbReference>
<dbReference type="EMBL" id="BC027280">
    <property type="protein sequence ID" value="AAH27280.1"/>
    <property type="molecule type" value="mRNA"/>
</dbReference>
<dbReference type="EMBL" id="L25274">
    <property type="protein sequence ID" value="AAA37528.1"/>
    <property type="molecule type" value="mRNA"/>
</dbReference>
<dbReference type="CCDS" id="CCDS37356.1"/>
<dbReference type="RefSeq" id="NP_033785.1">
    <property type="nucleotide sequence ID" value="NM_009655.3"/>
</dbReference>
<dbReference type="SMR" id="Q61490"/>
<dbReference type="BioGRID" id="198061">
    <property type="interactions" value="4"/>
</dbReference>
<dbReference type="FunCoup" id="Q61490">
    <property type="interactions" value="845"/>
</dbReference>
<dbReference type="STRING" id="10090.ENSMUSP00000023312"/>
<dbReference type="GlyConnect" id="2196">
    <property type="glycosylation" value="15 N-Linked glycans (4 sites)"/>
</dbReference>
<dbReference type="GlyCosmos" id="Q61490">
    <property type="glycosylation" value="8 sites, 15 glycans"/>
</dbReference>
<dbReference type="GlyGen" id="Q61490">
    <property type="glycosylation" value="9 sites, 24 N-linked glycans (8 sites), 1 O-linked glycan (1 site)"/>
</dbReference>
<dbReference type="iPTMnet" id="Q61490"/>
<dbReference type="PhosphoSitePlus" id="Q61490"/>
<dbReference type="SwissPalm" id="Q61490"/>
<dbReference type="CPTAC" id="non-CPTAC-3640"/>
<dbReference type="jPOST" id="Q61490"/>
<dbReference type="PaxDb" id="10090-ENSMUSP00000023312"/>
<dbReference type="PeptideAtlas" id="Q61490"/>
<dbReference type="ProteomicsDB" id="281133"/>
<dbReference type="Pumba" id="Q61490"/>
<dbReference type="Antibodypedia" id="2625">
    <property type="antibodies" value="904 antibodies from 41 providers"/>
</dbReference>
<dbReference type="DNASU" id="11658"/>
<dbReference type="Ensembl" id="ENSMUST00000023312.14">
    <property type="protein sequence ID" value="ENSMUSP00000023312.8"/>
    <property type="gene ID" value="ENSMUSG00000022636.14"/>
</dbReference>
<dbReference type="GeneID" id="11658"/>
<dbReference type="KEGG" id="mmu:11658"/>
<dbReference type="UCSC" id="uc007zli.2">
    <property type="organism name" value="mouse"/>
</dbReference>
<dbReference type="AGR" id="MGI:1313266"/>
<dbReference type="CTD" id="214"/>
<dbReference type="MGI" id="MGI:1313266">
    <property type="gene designation" value="Alcam"/>
</dbReference>
<dbReference type="VEuPathDB" id="HostDB:ENSMUSG00000022636"/>
<dbReference type="eggNOG" id="ENOG502RMQM">
    <property type="taxonomic scope" value="Eukaryota"/>
</dbReference>
<dbReference type="GeneTree" id="ENSGT00940000156881"/>
<dbReference type="HOGENOM" id="CLU_028888_2_0_1"/>
<dbReference type="InParanoid" id="Q61490"/>
<dbReference type="OMA" id="FACSVTY"/>
<dbReference type="OrthoDB" id="9945628at2759"/>
<dbReference type="PhylomeDB" id="Q61490"/>
<dbReference type="TreeFam" id="TF321859"/>
<dbReference type="BioGRID-ORCS" id="11658">
    <property type="hits" value="0 hits in 77 CRISPR screens"/>
</dbReference>
<dbReference type="ChiTaRS" id="Alcam">
    <property type="organism name" value="mouse"/>
</dbReference>
<dbReference type="PRO" id="PR:Q61490"/>
<dbReference type="Proteomes" id="UP000000589">
    <property type="component" value="Chromosome 16"/>
</dbReference>
<dbReference type="RNAct" id="Q61490">
    <property type="molecule type" value="protein"/>
</dbReference>
<dbReference type="Bgee" id="ENSMUSG00000022636">
    <property type="expression patterns" value="Expressed in olfactory tubercle and 298 other cell types or tissues"/>
</dbReference>
<dbReference type="ExpressionAtlas" id="Q61490">
    <property type="expression patterns" value="baseline and differential"/>
</dbReference>
<dbReference type="GO" id="GO:0030424">
    <property type="term" value="C:axon"/>
    <property type="evidence" value="ECO:0000314"/>
    <property type="project" value="MGI"/>
</dbReference>
<dbReference type="GO" id="GO:0030425">
    <property type="term" value="C:dendrite"/>
    <property type="evidence" value="ECO:0007669"/>
    <property type="project" value="UniProtKB-SubCell"/>
</dbReference>
<dbReference type="GO" id="GO:0009897">
    <property type="term" value="C:external side of plasma membrane"/>
    <property type="evidence" value="ECO:0000314"/>
    <property type="project" value="MGI"/>
</dbReference>
<dbReference type="GO" id="GO:0001772">
    <property type="term" value="C:immunological synapse"/>
    <property type="evidence" value="ECO:0000250"/>
    <property type="project" value="UniProtKB"/>
</dbReference>
<dbReference type="GO" id="GO:0043025">
    <property type="term" value="C:neuronal cell body"/>
    <property type="evidence" value="ECO:0000314"/>
    <property type="project" value="MGI"/>
</dbReference>
<dbReference type="GO" id="GO:0005886">
    <property type="term" value="C:plasma membrane"/>
    <property type="evidence" value="ECO:0000250"/>
    <property type="project" value="UniProtKB"/>
</dbReference>
<dbReference type="GO" id="GO:0042101">
    <property type="term" value="C:T cell receptor complex"/>
    <property type="evidence" value="ECO:0007669"/>
    <property type="project" value="Ensembl"/>
</dbReference>
<dbReference type="GO" id="GO:0042802">
    <property type="term" value="F:identical protein binding"/>
    <property type="evidence" value="ECO:0007669"/>
    <property type="project" value="Ensembl"/>
</dbReference>
<dbReference type="GO" id="GO:0002250">
    <property type="term" value="P:adaptive immune response"/>
    <property type="evidence" value="ECO:0007669"/>
    <property type="project" value="UniProtKB-KW"/>
</dbReference>
<dbReference type="GO" id="GO:0048846">
    <property type="term" value="P:axon extension involved in axon guidance"/>
    <property type="evidence" value="ECO:0000250"/>
    <property type="project" value="UniProtKB"/>
</dbReference>
<dbReference type="GO" id="GO:0007411">
    <property type="term" value="P:axon guidance"/>
    <property type="evidence" value="ECO:0000315"/>
    <property type="project" value="MGI"/>
</dbReference>
<dbReference type="GO" id="GO:0007155">
    <property type="term" value="P:cell adhesion"/>
    <property type="evidence" value="ECO:0000250"/>
    <property type="project" value="UniProtKB"/>
</dbReference>
<dbReference type="GO" id="GO:0007157">
    <property type="term" value="P:heterophilic cell-cell adhesion via plasma membrane cell adhesion molecules"/>
    <property type="evidence" value="ECO:0000250"/>
    <property type="project" value="UniProtKB"/>
</dbReference>
<dbReference type="GO" id="GO:0008045">
    <property type="term" value="P:motor neuron axon guidance"/>
    <property type="evidence" value="ECO:0000315"/>
    <property type="project" value="MGI"/>
</dbReference>
<dbReference type="GO" id="GO:1990138">
    <property type="term" value="P:neuron projection extension"/>
    <property type="evidence" value="ECO:0000250"/>
    <property type="project" value="UniProtKB"/>
</dbReference>
<dbReference type="GO" id="GO:0031290">
    <property type="term" value="P:retinal ganglion cell axon guidance"/>
    <property type="evidence" value="ECO:0000250"/>
    <property type="project" value="UniProtKB"/>
</dbReference>
<dbReference type="CDD" id="cd00096">
    <property type="entry name" value="Ig"/>
    <property type="match status" value="2"/>
</dbReference>
<dbReference type="FunFam" id="2.60.40.10:FF:001428">
    <property type="entry name" value="CD166 antigen"/>
    <property type="match status" value="1"/>
</dbReference>
<dbReference type="FunFam" id="2.60.40.10:FF:000351">
    <property type="entry name" value="CD166 antigen isoform X1"/>
    <property type="match status" value="1"/>
</dbReference>
<dbReference type="FunFam" id="2.60.40.10:FF:000383">
    <property type="entry name" value="CD166 antigen isoform X1"/>
    <property type="match status" value="1"/>
</dbReference>
<dbReference type="FunFam" id="2.60.40.10:FF:000384">
    <property type="entry name" value="CD166 antigen isoform X1"/>
    <property type="match status" value="1"/>
</dbReference>
<dbReference type="FunFam" id="2.60.40.10:FF:000472">
    <property type="entry name" value="CD166 antigen isoform X2"/>
    <property type="match status" value="1"/>
</dbReference>
<dbReference type="Gene3D" id="2.60.40.10">
    <property type="entry name" value="Immunoglobulins"/>
    <property type="match status" value="5"/>
</dbReference>
<dbReference type="InterPro" id="IPR013162">
    <property type="entry name" value="CD80_C2-set"/>
</dbReference>
<dbReference type="InterPro" id="IPR007110">
    <property type="entry name" value="Ig-like_dom"/>
</dbReference>
<dbReference type="InterPro" id="IPR036179">
    <property type="entry name" value="Ig-like_dom_sf"/>
</dbReference>
<dbReference type="InterPro" id="IPR013783">
    <property type="entry name" value="Ig-like_fold"/>
</dbReference>
<dbReference type="InterPro" id="IPR003599">
    <property type="entry name" value="Ig_sub"/>
</dbReference>
<dbReference type="InterPro" id="IPR051116">
    <property type="entry name" value="Surface_Rcpt/Adhesion_Mol"/>
</dbReference>
<dbReference type="PANTHER" id="PTHR11973:SF2">
    <property type="entry name" value="CD166 ANTIGEN"/>
    <property type="match status" value="1"/>
</dbReference>
<dbReference type="PANTHER" id="PTHR11973">
    <property type="entry name" value="CELL SURFACE GLYCOPROTEIN MUC18-RELATED"/>
    <property type="match status" value="1"/>
</dbReference>
<dbReference type="Pfam" id="PF08205">
    <property type="entry name" value="C2-set_2"/>
    <property type="match status" value="1"/>
</dbReference>
<dbReference type="Pfam" id="PF13927">
    <property type="entry name" value="Ig_3"/>
    <property type="match status" value="1"/>
</dbReference>
<dbReference type="SMART" id="SM00409">
    <property type="entry name" value="IG"/>
    <property type="match status" value="3"/>
</dbReference>
<dbReference type="SUPFAM" id="SSF48726">
    <property type="entry name" value="Immunoglobulin"/>
    <property type="match status" value="4"/>
</dbReference>
<dbReference type="PROSITE" id="PS50835">
    <property type="entry name" value="IG_LIKE"/>
    <property type="match status" value="4"/>
</dbReference>
<organism>
    <name type="scientific">Mus musculus</name>
    <name type="common">Mouse</name>
    <dbReference type="NCBI Taxonomy" id="10090"/>
    <lineage>
        <taxon>Eukaryota</taxon>
        <taxon>Metazoa</taxon>
        <taxon>Chordata</taxon>
        <taxon>Craniata</taxon>
        <taxon>Vertebrata</taxon>
        <taxon>Euteleostomi</taxon>
        <taxon>Mammalia</taxon>
        <taxon>Eutheria</taxon>
        <taxon>Euarchontoglires</taxon>
        <taxon>Glires</taxon>
        <taxon>Rodentia</taxon>
        <taxon>Myomorpha</taxon>
        <taxon>Muroidea</taxon>
        <taxon>Muridae</taxon>
        <taxon>Murinae</taxon>
        <taxon>Mus</taxon>
        <taxon>Mus</taxon>
    </lineage>
</organism>
<protein>
    <recommendedName>
        <fullName>CD166 antigen</fullName>
    </recommendedName>
    <alternativeName>
        <fullName evidence="14">Activated leukocyte cell adhesion molecule</fullName>
    </alternativeName>
    <alternativeName>
        <fullName evidence="12">BEN</fullName>
    </alternativeName>
    <alternativeName>
        <fullName evidence="13">Protein DM-GRASP</fullName>
    </alternativeName>
    <cdAntigenName>CD166</cdAntigenName>
</protein>
<feature type="signal peptide" evidence="3">
    <location>
        <begin position="1"/>
        <end position="27"/>
    </location>
</feature>
<feature type="chain" id="PRO_0000014660" description="CD166 antigen">
    <location>
        <begin position="28"/>
        <end position="583"/>
    </location>
</feature>
<feature type="topological domain" description="Extracellular" evidence="3">
    <location>
        <begin position="28"/>
        <end position="527"/>
    </location>
</feature>
<feature type="transmembrane region" description="Helical" evidence="3">
    <location>
        <begin position="528"/>
        <end position="549"/>
    </location>
</feature>
<feature type="topological domain" description="Cytoplasmic" evidence="3">
    <location>
        <begin position="550"/>
        <end position="583"/>
    </location>
</feature>
<feature type="domain" description="Ig-like V-type 1">
    <location>
        <begin position="28"/>
        <end position="120"/>
    </location>
</feature>
<feature type="domain" description="Ig-like V-type 2">
    <location>
        <begin position="125"/>
        <end position="234"/>
    </location>
</feature>
<feature type="domain" description="Ig-like C2-type 1">
    <location>
        <begin position="245"/>
        <end position="328"/>
    </location>
</feature>
<feature type="domain" description="Ig-like C2-type 2">
    <location>
        <begin position="333"/>
        <end position="409"/>
    </location>
</feature>
<feature type="domain" description="Ig-like C2-type 3">
    <location>
        <begin position="416"/>
        <end position="501"/>
    </location>
</feature>
<feature type="region of interest" description="Disordered" evidence="5">
    <location>
        <begin position="562"/>
        <end position="583"/>
    </location>
</feature>
<feature type="compositionally biased region" description="Basic and acidic residues" evidence="5">
    <location>
        <begin position="569"/>
        <end position="583"/>
    </location>
</feature>
<feature type="glycosylation site" description="N-linked (GlcNAc...) asparagine" evidence="8">
    <location>
        <position position="95"/>
    </location>
</feature>
<feature type="glycosylation site" description="N-linked (GlcNAc...) asparagine" evidence="8">
    <location>
        <position position="167"/>
    </location>
</feature>
<feature type="glycosylation site" description="N-linked (GlcNAc...) asparagine" evidence="3">
    <location>
        <position position="265"/>
    </location>
</feature>
<feature type="glycosylation site" description="N-linked (GlcNAc...) asparagine" evidence="3">
    <location>
        <position position="306"/>
    </location>
</feature>
<feature type="glycosylation site" description="N-linked (GlcNAc...) asparagine" evidence="3">
    <location>
        <position position="361"/>
    </location>
</feature>
<feature type="glycosylation site" description="N-linked (GlcNAc...) asparagine" evidence="8">
    <location>
        <position position="457"/>
    </location>
</feature>
<feature type="glycosylation site" description="N-linked (GlcNAc...) asparagine" evidence="3">
    <location>
        <position position="480"/>
    </location>
</feature>
<feature type="glycosylation site" description="N-linked (GlcNAc...) asparagine" evidence="8">
    <location>
        <position position="499"/>
    </location>
</feature>
<feature type="disulfide bond" evidence="4">
    <location>
        <begin position="43"/>
        <end position="113"/>
    </location>
</feature>
<feature type="disulfide bond" evidence="4">
    <location>
        <begin position="157"/>
        <end position="220"/>
    </location>
</feature>
<feature type="disulfide bond" evidence="4">
    <location>
        <begin position="270"/>
        <end position="313"/>
    </location>
</feature>
<feature type="disulfide bond" evidence="4">
    <location>
        <begin position="354"/>
        <end position="392"/>
    </location>
</feature>
<feature type="disulfide bond" evidence="4">
    <location>
        <begin position="435"/>
        <end position="485"/>
    </location>
</feature>
<feature type="sequence conflict" description="In Ref. 2; BAC27159." evidence="15" ref="2">
    <original>S</original>
    <variation>C</variation>
    <location>
        <position position="8"/>
    </location>
</feature>
<feature type="sequence conflict" description="In Ref. 4; AAA37528." evidence="15" ref="4">
    <original>PSGQKT</original>
    <variation>AAGIPA</variation>
    <location>
        <begin position="227"/>
        <end position="232"/>
    </location>
</feature>
<feature type="sequence conflict" description="In Ref. 1 and 4." evidence="15" ref="1 4">
    <original>S</original>
    <variation>R</variation>
    <location>
        <position position="339"/>
    </location>
</feature>
<feature type="sequence conflict" description="In Ref. 2; BAC27159." evidence="15" ref="2">
    <original>G</original>
    <variation>S</variation>
    <location>
        <position position="451"/>
    </location>
</feature>
<feature type="sequence conflict" description="In Ref. 4; AAA37528." evidence="15" ref="4">
    <original>S</original>
    <variation>F</variation>
    <location>
        <position position="454"/>
    </location>
</feature>
<proteinExistence type="evidence at protein level"/>
<reference key="1">
    <citation type="journal article" date="1997" name="Eur. J. Immunol.">
        <title>Characterization of mouse ALCAM (CD166): the CD6 binding domain is conserved in different homologs and mediates cross-species binding.</title>
        <authorList>
            <person name="Bowen M.A."/>
            <person name="Bajorath J."/>
            <person name="D'Egidio M."/>
            <person name="Whitney G.S."/>
            <person name="Palmer D."/>
            <person name="Kobarg J."/>
            <person name="Starling G.C."/>
            <person name="Siadak A.W."/>
            <person name="Aruffo A."/>
        </authorList>
    </citation>
    <scope>NUCLEOTIDE SEQUENCE [MRNA]</scope>
    <scope>INTERACTION WITH CD6</scope>
    <scope>SUBCELLULAR LOCATION</scope>
    <scope>DOMAIN</scope>
    <scope>TISSUE SPECIFICITY</scope>
    <source>
        <strain>NFS</strain>
    </source>
</reference>
<reference key="2">
    <citation type="journal article" date="2005" name="Science">
        <title>The transcriptional landscape of the mammalian genome.</title>
        <authorList>
            <person name="Carninci P."/>
            <person name="Kasukawa T."/>
            <person name="Katayama S."/>
            <person name="Gough J."/>
            <person name="Frith M.C."/>
            <person name="Maeda N."/>
            <person name="Oyama R."/>
            <person name="Ravasi T."/>
            <person name="Lenhard B."/>
            <person name="Wells C."/>
            <person name="Kodzius R."/>
            <person name="Shimokawa K."/>
            <person name="Bajic V.B."/>
            <person name="Brenner S.E."/>
            <person name="Batalov S."/>
            <person name="Forrest A.R."/>
            <person name="Zavolan M."/>
            <person name="Davis M.J."/>
            <person name="Wilming L.G."/>
            <person name="Aidinis V."/>
            <person name="Allen J.E."/>
            <person name="Ambesi-Impiombato A."/>
            <person name="Apweiler R."/>
            <person name="Aturaliya R.N."/>
            <person name="Bailey T.L."/>
            <person name="Bansal M."/>
            <person name="Baxter L."/>
            <person name="Beisel K.W."/>
            <person name="Bersano T."/>
            <person name="Bono H."/>
            <person name="Chalk A.M."/>
            <person name="Chiu K.P."/>
            <person name="Choudhary V."/>
            <person name="Christoffels A."/>
            <person name="Clutterbuck D.R."/>
            <person name="Crowe M.L."/>
            <person name="Dalla E."/>
            <person name="Dalrymple B.P."/>
            <person name="de Bono B."/>
            <person name="Della Gatta G."/>
            <person name="di Bernardo D."/>
            <person name="Down T."/>
            <person name="Engstrom P."/>
            <person name="Fagiolini M."/>
            <person name="Faulkner G."/>
            <person name="Fletcher C.F."/>
            <person name="Fukushima T."/>
            <person name="Furuno M."/>
            <person name="Futaki S."/>
            <person name="Gariboldi M."/>
            <person name="Georgii-Hemming P."/>
            <person name="Gingeras T.R."/>
            <person name="Gojobori T."/>
            <person name="Green R.E."/>
            <person name="Gustincich S."/>
            <person name="Harbers M."/>
            <person name="Hayashi Y."/>
            <person name="Hensch T.K."/>
            <person name="Hirokawa N."/>
            <person name="Hill D."/>
            <person name="Huminiecki L."/>
            <person name="Iacono M."/>
            <person name="Ikeo K."/>
            <person name="Iwama A."/>
            <person name="Ishikawa T."/>
            <person name="Jakt M."/>
            <person name="Kanapin A."/>
            <person name="Katoh M."/>
            <person name="Kawasawa Y."/>
            <person name="Kelso J."/>
            <person name="Kitamura H."/>
            <person name="Kitano H."/>
            <person name="Kollias G."/>
            <person name="Krishnan S.P."/>
            <person name="Kruger A."/>
            <person name="Kummerfeld S.K."/>
            <person name="Kurochkin I.V."/>
            <person name="Lareau L.F."/>
            <person name="Lazarevic D."/>
            <person name="Lipovich L."/>
            <person name="Liu J."/>
            <person name="Liuni S."/>
            <person name="McWilliam S."/>
            <person name="Madan Babu M."/>
            <person name="Madera M."/>
            <person name="Marchionni L."/>
            <person name="Matsuda H."/>
            <person name="Matsuzawa S."/>
            <person name="Miki H."/>
            <person name="Mignone F."/>
            <person name="Miyake S."/>
            <person name="Morris K."/>
            <person name="Mottagui-Tabar S."/>
            <person name="Mulder N."/>
            <person name="Nakano N."/>
            <person name="Nakauchi H."/>
            <person name="Ng P."/>
            <person name="Nilsson R."/>
            <person name="Nishiguchi S."/>
            <person name="Nishikawa S."/>
            <person name="Nori F."/>
            <person name="Ohara O."/>
            <person name="Okazaki Y."/>
            <person name="Orlando V."/>
            <person name="Pang K.C."/>
            <person name="Pavan W.J."/>
            <person name="Pavesi G."/>
            <person name="Pesole G."/>
            <person name="Petrovsky N."/>
            <person name="Piazza S."/>
            <person name="Reed J."/>
            <person name="Reid J.F."/>
            <person name="Ring B.Z."/>
            <person name="Ringwald M."/>
            <person name="Rost B."/>
            <person name="Ruan Y."/>
            <person name="Salzberg S.L."/>
            <person name="Sandelin A."/>
            <person name="Schneider C."/>
            <person name="Schoenbach C."/>
            <person name="Sekiguchi K."/>
            <person name="Semple C.A."/>
            <person name="Seno S."/>
            <person name="Sessa L."/>
            <person name="Sheng Y."/>
            <person name="Shibata Y."/>
            <person name="Shimada H."/>
            <person name="Shimada K."/>
            <person name="Silva D."/>
            <person name="Sinclair B."/>
            <person name="Sperling S."/>
            <person name="Stupka E."/>
            <person name="Sugiura K."/>
            <person name="Sultana R."/>
            <person name="Takenaka Y."/>
            <person name="Taki K."/>
            <person name="Tammoja K."/>
            <person name="Tan S.L."/>
            <person name="Tang S."/>
            <person name="Taylor M.S."/>
            <person name="Tegner J."/>
            <person name="Teichmann S.A."/>
            <person name="Ueda H.R."/>
            <person name="van Nimwegen E."/>
            <person name="Verardo R."/>
            <person name="Wei C.L."/>
            <person name="Yagi K."/>
            <person name="Yamanishi H."/>
            <person name="Zabarovsky E."/>
            <person name="Zhu S."/>
            <person name="Zimmer A."/>
            <person name="Hide W."/>
            <person name="Bult C."/>
            <person name="Grimmond S.M."/>
            <person name="Teasdale R.D."/>
            <person name="Liu E.T."/>
            <person name="Brusic V."/>
            <person name="Quackenbush J."/>
            <person name="Wahlestedt C."/>
            <person name="Mattick J.S."/>
            <person name="Hume D.A."/>
            <person name="Kai C."/>
            <person name="Sasaki D."/>
            <person name="Tomaru Y."/>
            <person name="Fukuda S."/>
            <person name="Kanamori-Katayama M."/>
            <person name="Suzuki M."/>
            <person name="Aoki J."/>
            <person name="Arakawa T."/>
            <person name="Iida J."/>
            <person name="Imamura K."/>
            <person name="Itoh M."/>
            <person name="Kato T."/>
            <person name="Kawaji H."/>
            <person name="Kawagashira N."/>
            <person name="Kawashima T."/>
            <person name="Kojima M."/>
            <person name="Kondo S."/>
            <person name="Konno H."/>
            <person name="Nakano K."/>
            <person name="Ninomiya N."/>
            <person name="Nishio T."/>
            <person name="Okada M."/>
            <person name="Plessy C."/>
            <person name="Shibata K."/>
            <person name="Shiraki T."/>
            <person name="Suzuki S."/>
            <person name="Tagami M."/>
            <person name="Waki K."/>
            <person name="Watahiki A."/>
            <person name="Okamura-Oho Y."/>
            <person name="Suzuki H."/>
            <person name="Kawai J."/>
            <person name="Hayashizaki Y."/>
        </authorList>
    </citation>
    <scope>NUCLEOTIDE SEQUENCE [LARGE SCALE MRNA]</scope>
    <source>
        <strain>C57BL/6J</strain>
        <tissue>Thymus</tissue>
    </source>
</reference>
<reference key="3">
    <citation type="journal article" date="2004" name="Genome Res.">
        <title>The status, quality, and expansion of the NIH full-length cDNA project: the Mammalian Gene Collection (MGC).</title>
        <authorList>
            <consortium name="The MGC Project Team"/>
        </authorList>
    </citation>
    <scope>NUCLEOTIDE SEQUENCE [LARGE SCALE MRNA]</scope>
</reference>
<reference key="4">
    <citation type="journal article" date="1994" name="J. Neurobiol.">
        <title>The molecular cloning and characterization of potential chick DM-GRASP homologs in zebrafish and mouse.</title>
        <authorList>
            <person name="Kanki J.P."/>
            <person name="Chang S."/>
            <person name="Kuwada J.Y."/>
        </authorList>
    </citation>
    <scope>NUCLEOTIDE SEQUENCE [MRNA] OF 227-583</scope>
    <source>
        <strain>BALB/cJ</strain>
        <tissue>Brain</tissue>
    </source>
</reference>
<reference key="5">
    <citation type="journal article" date="2004" name="Mol. Cell. Neurosci.">
        <title>Axon fasciculation defects and retinal dysplasias in mice lacking the immunoglobulin superfamily adhesion molecule BEN/ALCAM/SC1.</title>
        <authorList>
            <person name="Weiner J.A."/>
            <person name="Koo S.J."/>
            <person name="Nicolas S."/>
            <person name="Fraboulet S."/>
            <person name="Pfaff S.L."/>
            <person name="Pourquie O."/>
            <person name="Sanes J.R."/>
        </authorList>
    </citation>
    <scope>FUNCTION</scope>
    <scope>DISRUPTION PHENOTYPE</scope>
    <scope>SUBCELLULAR LOCATION</scope>
    <scope>TISSUE SPECIFICITY</scope>
</reference>
<reference key="6">
    <citation type="journal article" date="2006" name="Mol. Cell. Biol.">
        <title>CD6 regulates T-cell responses through activation-dependent recruitment of the positive regulator SLP-76.</title>
        <authorList>
            <person name="Hassan N.J."/>
            <person name="Simmonds S.J."/>
            <person name="Clarkson N.G."/>
            <person name="Hanrahan S."/>
            <person name="Puklavec M.J."/>
            <person name="Bomb M."/>
            <person name="Barclay A.N."/>
            <person name="Brown M.H."/>
        </authorList>
    </citation>
    <scope>INTERACTION WITH CD6</scope>
    <scope>SUBCELLULAR LOCATION</scope>
</reference>
<reference key="7">
    <citation type="journal article" date="2009" name="Mol. Cell. Proteomics">
        <title>The mouse C2C12 myoblast cell surface N-linked glycoproteome: identification, glycosite occupancy, and membrane orientation.</title>
        <authorList>
            <person name="Gundry R.L."/>
            <person name="Raginski K."/>
            <person name="Tarasova Y."/>
            <person name="Tchernyshyov I."/>
            <person name="Bausch-Fluck D."/>
            <person name="Elliott S.T."/>
            <person name="Boheler K.R."/>
            <person name="Van Eyk J.E."/>
            <person name="Wollscheid B."/>
        </authorList>
    </citation>
    <scope>GLYCOSYLATION [LARGE SCALE ANALYSIS] AT ASN-95; ASN-167; ASN-457 AND ASN-499</scope>
    <source>
        <tissue>Myoblast</tissue>
    </source>
</reference>
<reference key="8">
    <citation type="journal article" date="2010" name="Cell">
        <title>A tissue-specific atlas of mouse protein phosphorylation and expression.</title>
        <authorList>
            <person name="Huttlin E.L."/>
            <person name="Jedrychowski M.P."/>
            <person name="Elias J.E."/>
            <person name="Goswami T."/>
            <person name="Rad R."/>
            <person name="Beausoleil S.A."/>
            <person name="Villen J."/>
            <person name="Haas W."/>
            <person name="Sowa M.E."/>
            <person name="Gygi S.P."/>
        </authorList>
    </citation>
    <scope>IDENTIFICATION BY MASS SPECTROMETRY [LARGE SCALE ANALYSIS]</scope>
    <source>
        <tissue>Brain</tissue>
        <tissue>Kidney</tissue>
        <tissue>Liver</tissue>
        <tissue>Lung</tissue>
        <tissue>Pancreas</tissue>
        <tissue>Spleen</tissue>
        <tissue>Testis</tissue>
    </source>
</reference>
<reference key="9">
    <citation type="journal article" date="2013" name="FASEB J.">
        <title>Novel role for ALCAM in lymphatic network formation and function.</title>
        <authorList>
            <person name="Iolyeva M."/>
            <person name="Karaman S."/>
            <person name="Willrodt A.H."/>
            <person name="Weingartner S."/>
            <person name="Vigl B."/>
            <person name="Halin C."/>
        </authorList>
    </citation>
    <scope>FUNCTION</scope>
    <scope>DISRUPTION PHENOTYPE</scope>
    <scope>SUBCELLULAR LOCATION</scope>
    <scope>TISSUE SPECIFICITY</scope>
</reference>
<reference key="10">
    <citation type="journal article" date="2014" name="Blood">
        <title>CD166 regulates human and murine hematopoietic stem cells and the hematopoietic niche.</title>
        <authorList>
            <person name="Chitteti B.R."/>
            <person name="Kobayashi M."/>
            <person name="Cheng Y."/>
            <person name="Zhang H."/>
            <person name="Poteat B.A."/>
            <person name="Broxmeyer H.E."/>
            <person name="Pelus L.M."/>
            <person name="Hanenberg H."/>
            <person name="Zollman A."/>
            <person name="Kamocka M.M."/>
            <person name="Carlesso N."/>
            <person name="Cardoso A.A."/>
            <person name="Kacena M.A."/>
            <person name="Srour E.F."/>
        </authorList>
    </citation>
    <scope>FUNCTION</scope>
    <scope>DISRUPTION PHENOTYPE</scope>
</reference>
<reference key="11">
    <citation type="journal article" date="2015" name="J. Musculoskelet. Neuronal Interact.">
        <title>Activated leukocyte cell adhesion molecule (ALCAM or CD166) modulates bone phenotype and hematopoiesis.</title>
        <authorList>
            <person name="Hooker R.A."/>
            <person name="Chitteti B.R."/>
            <person name="Egan P.H."/>
            <person name="Cheng Y.H."/>
            <person name="Himes E.R."/>
            <person name="Meijome T."/>
            <person name="Srour E.F."/>
            <person name="Fuchs R.K."/>
            <person name="Kacena M.A."/>
        </authorList>
    </citation>
    <scope>FUNCTION</scope>
    <scope>DISRUPTION PHENOTYPE</scope>
</reference>
<keyword id="KW-1064">Adaptive immunity</keyword>
<keyword id="KW-0130">Cell adhesion</keyword>
<keyword id="KW-1003">Cell membrane</keyword>
<keyword id="KW-0966">Cell projection</keyword>
<keyword id="KW-1015">Disulfide bond</keyword>
<keyword id="KW-0325">Glycoprotein</keyword>
<keyword id="KW-0391">Immunity</keyword>
<keyword id="KW-0393">Immunoglobulin domain</keyword>
<keyword id="KW-0472">Membrane</keyword>
<keyword id="KW-1185">Reference proteome</keyword>
<keyword id="KW-0677">Repeat</keyword>
<keyword id="KW-0732">Signal</keyword>
<keyword id="KW-0812">Transmembrane</keyword>
<keyword id="KW-1133">Transmembrane helix</keyword>
<comment type="function">
    <text evidence="1 2 6 9">Cell adhesion molecule that mediates both heterotypic cell-cell contacts via its interaction with CD6, as well as homotypic cell-cell contacts. Promotes T-cell activation and proliferation via its interactions with CD6 (By similarity). Contributes to the formation and maturation of the immunological synapse via its interactions with CD6 (By similarity). Mediates homotypic interactions with cells that express ALCAM (PubMed:24740813). Mediates attachment of dendritic cells onto endothelial cells via homotypic interaction. Inhibits endothelial cell migration and promotes endothelial tube formation via homotypic interactions (PubMed:23169771). Required for normal organization of the lymph vessel network (PubMed:23169771). Required for normal hematopoietic stem cell engraftment in the bone marrow (PubMed:24740813). Plays a role in hematopoiesis; required for normal numbers of hematopoietic stem cells in bone marrow (PubMed:25730656). Promotes in vitro osteoblast proliferation and differentiation (PubMed:25730656). Promotes neurite extension, axon growth and axon guidance; axons grow preferentially on surfaces that contain ALCAM (By similarity). Mediates outgrowth and pathfinding for retinal ganglion cell axons (PubMed:15345243).</text>
</comment>
<comment type="subunit">
    <text evidence="2 7 11">Homodimer (By similarity). Interacts (via extracellular domain) with CD6 (via extracellular domain) (PubMed:16914752, PubMed:9209500). Homodimerization and interaction with CD6 involve the same region and cannot occur simultaneously. The affinity for CD6 is much higher than the affinity for self-association. Interacts (via glycosylated extracellular domain) with LGALS1 and LGALS3. Interaction with LGALS1 or LGALS3 inhibits interaction with CD6.</text>
</comment>
<comment type="subcellular location">
    <subcellularLocation>
        <location evidence="6 7 9 11">Cell membrane</location>
        <topology evidence="15">Single-pass type I membrane protein</topology>
    </subcellularLocation>
    <subcellularLocation>
        <location evidence="6">Cell projection</location>
        <location evidence="6">Axon</location>
    </subcellularLocation>
    <subcellularLocation>
        <location evidence="6">Cell projection</location>
        <location evidence="6">Dendrite</location>
    </subcellularLocation>
    <text evidence="2">Detected at the immunological synapse, i.e, at the contact zone between antigen-presenting dendritic cells and T-cells. Colocalizes with CD6 and the TCR/CD3 complex at the immunological synapse.</text>
</comment>
<comment type="tissue specificity">
    <text evidence="6 9 11">Detected on brain motor neurons, in differentiating retinal ganglion cells and in adult retina (PubMed:15345243). Detected on leukocytes and on lymphatic endothelial cells (PubMed:23169771). Detected in spleen B cells and T-cells (at protein level) (PubMed:9209500). Detected in adult brain and embryonic spinal cord (PubMed:15345243). Expressed at high levels in the brain, and lung, and at lower levels in the liver, and the kidney, as well as by activated leukocytes (PubMed:9209500).</text>
</comment>
<comment type="domain">
    <text evidence="11">The CD6 binding site is located in the N-terminal Ig-like domain.</text>
</comment>
<comment type="PTM">
    <text evidence="2">Glycosylated.</text>
</comment>
<comment type="disruption phenotype">
    <text evidence="6 9 10">Mice are born at the expected Mendelian rate, are viable and fertile and display no obvious external phenotype. Unlike wild-type mice, that have tightly fasciculated and smooth nerve bundles, mutant mice have more loosely bundled nerves with many single axons extending out of the main nerve. Eyes from mutant mice display a variable degree of retinal displasia (PubMed:15345243). Besides, lymph nodes from mutant mice display reduced weight and cellularity, but appear otherwise normal (PubMed:23169771). Mutant mice have only half of the normal number of hematopoietic stem cells in their bone marrow (PubMed:24740813, PubMed:25730656). Survival of lethally irradiated mice that receive bone marrow from mutant mice is impaired, due to impaired homotypic cell-cell attachment, impaired engraftment and proliferation of mutant hematopoietic stem cells (PubMed:24740813). Mutant mice are larger and heavier than wild-type and have increased bone mineral density (PubMed:25730656). Mutant spleen has an altered leukocyte composition, with reduced numbers of CD4(+) and CD8(+) T-cells, B-cells, dendritic cells, neutrophils and macrophages, but no change in the total leukocyte number. Their lungs display reduced numbers of lymph vessel and blood vessel endothelial cells, but no difference in lung weight. Lymph vessels in mesentery and diaphragm are more densely interconnected and show a decreased level of hierarchical vascular organization in mutant mice (PubMed:23169771).</text>
</comment>
<gene>
    <name type="primary">Alcam</name>
</gene>
<sequence length="583" mass="65092">MASKVSPSCRLVFCLLISAAVLRPGLGWYTVNSAYGDTIVMPCRLDVPQNLMFGKWKYEKPDGSPVFIAFRSSTKKSVQYDDVPEYKDRLSLSENYTLSIANAKISDEKRFVCMLVTEDNVFEAPTLVKVFKQPSKPEIVNKAPFLETDQLKKLGDCISRDSYPDGNITWYRNGKVLQPVEGEVAILFKKEIDPGTQLYTVTSSLEYKTTRSDIQMPFTCSVTYYGPSGQKTIYSEQEIFDIYYPTEQVTIQVLPPKNAIKEGDNITLQCLGNGNPPPEEFMFYLPGQPEGIRSSNTYTLTDVRRNATGDYKCSLIDKRNMAASTTITVHYLDLSLNPSGEVTKQIGDTLPVSCTISASRNATVVWMKDNIRLRSSPSFSSLHYQDAGNYVCETALQEVEGLKKRESLTLIVEGKPQIKMTKKTDPSGLSKTIICHVEGFPKPAIHWTITGSGSVINQTEESPYINGRYYSKIIISPEENVTLTCTAENQLERTVNSLNVSAISIPEHDEADDISDENREKVNDQAKLIVGIVVGLLLAALVAGVVYWLYMKKSKTASKHVNKDLGNMEENKKLEENNHKTEA</sequence>
<evidence type="ECO:0000250" key="1">
    <source>
        <dbReference type="UniProtKB" id="P42292"/>
    </source>
</evidence>
<evidence type="ECO:0000250" key="2">
    <source>
        <dbReference type="UniProtKB" id="Q13740"/>
    </source>
</evidence>
<evidence type="ECO:0000255" key="3"/>
<evidence type="ECO:0000255" key="4">
    <source>
        <dbReference type="PROSITE-ProRule" id="PRU00114"/>
    </source>
</evidence>
<evidence type="ECO:0000256" key="5">
    <source>
        <dbReference type="SAM" id="MobiDB-lite"/>
    </source>
</evidence>
<evidence type="ECO:0000269" key="6">
    <source>
    </source>
</evidence>
<evidence type="ECO:0000269" key="7">
    <source>
    </source>
</evidence>
<evidence type="ECO:0000269" key="8">
    <source>
    </source>
</evidence>
<evidence type="ECO:0000269" key="9">
    <source>
    </source>
</evidence>
<evidence type="ECO:0000269" key="10">
    <source>
    </source>
</evidence>
<evidence type="ECO:0000269" key="11">
    <source>
    </source>
</evidence>
<evidence type="ECO:0000303" key="12">
    <source>
    </source>
</evidence>
<evidence type="ECO:0000303" key="13">
    <source>
    </source>
</evidence>
<evidence type="ECO:0000303" key="14">
    <source>
    </source>
</evidence>
<evidence type="ECO:0000305" key="15"/>
<name>CD166_MOUSE</name>